<sequence>MTTPRLILASASPARRRLLATVGLTVEVQPSHFDESLVQLNDPPALVQELAFRKAASVARSQTEPALVLGCDSVLAINGEICGKPASPAEAIARWQQMRGQWGELHTGHALIDSASQRRWLACGTTRVRFAEVEDAEIKAYVATGEPLACAGAFALEGKGGLFIAEIQGCHTNVIGLSLPLLRELLLAADYPLLQAWQT</sequence>
<protein>
    <recommendedName>
        <fullName evidence="1">Nucleoside triphosphate pyrophosphatase</fullName>
        <ecNumber evidence="1">3.6.1.9</ecNumber>
    </recommendedName>
    <alternativeName>
        <fullName evidence="1">Nucleotide pyrophosphatase</fullName>
        <shortName evidence="1">Nucleotide PPase</shortName>
    </alternativeName>
</protein>
<keyword id="KW-0963">Cytoplasm</keyword>
<keyword id="KW-0378">Hydrolase</keyword>
<keyword id="KW-0546">Nucleotide metabolism</keyword>
<keyword id="KW-1185">Reference proteome</keyword>
<accession>Q31RS8</accession>
<name>NTPP_SYNE7</name>
<dbReference type="EC" id="3.6.1.9" evidence="1"/>
<dbReference type="EMBL" id="CP000100">
    <property type="protein sequence ID" value="ABB56241.1"/>
    <property type="status" value="ALT_INIT"/>
    <property type="molecule type" value="Genomic_DNA"/>
</dbReference>
<dbReference type="SMR" id="Q31RS8"/>
<dbReference type="STRING" id="1140.Synpcc7942_0209"/>
<dbReference type="PaxDb" id="1140-Synpcc7942_0209"/>
<dbReference type="KEGG" id="syf:Synpcc7942_0209"/>
<dbReference type="eggNOG" id="COG0424">
    <property type="taxonomic scope" value="Bacteria"/>
</dbReference>
<dbReference type="HOGENOM" id="CLU_040416_1_2_3"/>
<dbReference type="BioCyc" id="SYNEL:SYNPCC7942_0209-MONOMER"/>
<dbReference type="Proteomes" id="UP000889800">
    <property type="component" value="Chromosome"/>
</dbReference>
<dbReference type="GO" id="GO:0005737">
    <property type="term" value="C:cytoplasm"/>
    <property type="evidence" value="ECO:0007669"/>
    <property type="project" value="UniProtKB-SubCell"/>
</dbReference>
<dbReference type="GO" id="GO:0047429">
    <property type="term" value="F:nucleoside triphosphate diphosphatase activity"/>
    <property type="evidence" value="ECO:0007669"/>
    <property type="project" value="UniProtKB-EC"/>
</dbReference>
<dbReference type="GO" id="GO:0009117">
    <property type="term" value="P:nucleotide metabolic process"/>
    <property type="evidence" value="ECO:0007669"/>
    <property type="project" value="UniProtKB-KW"/>
</dbReference>
<dbReference type="CDD" id="cd00555">
    <property type="entry name" value="Maf"/>
    <property type="match status" value="1"/>
</dbReference>
<dbReference type="Gene3D" id="3.90.950.10">
    <property type="match status" value="1"/>
</dbReference>
<dbReference type="HAMAP" id="MF_00528">
    <property type="entry name" value="Maf"/>
    <property type="match status" value="1"/>
</dbReference>
<dbReference type="InterPro" id="IPR029001">
    <property type="entry name" value="ITPase-like_fam"/>
</dbReference>
<dbReference type="InterPro" id="IPR003697">
    <property type="entry name" value="Maf-like"/>
</dbReference>
<dbReference type="NCBIfam" id="TIGR00172">
    <property type="entry name" value="maf"/>
    <property type="match status" value="1"/>
</dbReference>
<dbReference type="PANTHER" id="PTHR43213">
    <property type="entry name" value="BIFUNCTIONAL DTTP/UTP PYROPHOSPHATASE/METHYLTRANSFERASE PROTEIN-RELATED"/>
    <property type="match status" value="1"/>
</dbReference>
<dbReference type="PANTHER" id="PTHR43213:SF5">
    <property type="entry name" value="BIFUNCTIONAL DTTP_UTP PYROPHOSPHATASE_METHYLTRANSFERASE PROTEIN-RELATED"/>
    <property type="match status" value="1"/>
</dbReference>
<dbReference type="Pfam" id="PF02545">
    <property type="entry name" value="Maf"/>
    <property type="match status" value="1"/>
</dbReference>
<dbReference type="PIRSF" id="PIRSF006305">
    <property type="entry name" value="Maf"/>
    <property type="match status" value="1"/>
</dbReference>
<dbReference type="SUPFAM" id="SSF52972">
    <property type="entry name" value="ITPase-like"/>
    <property type="match status" value="1"/>
</dbReference>
<comment type="function">
    <text evidence="1">Nucleoside triphosphate pyrophosphatase. May have a dual role in cell division arrest and in preventing the incorporation of modified nucleotides into cellular nucleic acids.</text>
</comment>
<comment type="catalytic activity">
    <reaction evidence="1">
        <text>a ribonucleoside 5'-triphosphate + H2O = a ribonucleoside 5'-phosphate + diphosphate + H(+)</text>
        <dbReference type="Rhea" id="RHEA:23996"/>
        <dbReference type="ChEBI" id="CHEBI:15377"/>
        <dbReference type="ChEBI" id="CHEBI:15378"/>
        <dbReference type="ChEBI" id="CHEBI:33019"/>
        <dbReference type="ChEBI" id="CHEBI:58043"/>
        <dbReference type="ChEBI" id="CHEBI:61557"/>
        <dbReference type="EC" id="3.6.1.9"/>
    </reaction>
</comment>
<comment type="catalytic activity">
    <reaction evidence="1">
        <text>a 2'-deoxyribonucleoside 5'-triphosphate + H2O = a 2'-deoxyribonucleoside 5'-phosphate + diphosphate + H(+)</text>
        <dbReference type="Rhea" id="RHEA:44644"/>
        <dbReference type="ChEBI" id="CHEBI:15377"/>
        <dbReference type="ChEBI" id="CHEBI:15378"/>
        <dbReference type="ChEBI" id="CHEBI:33019"/>
        <dbReference type="ChEBI" id="CHEBI:61560"/>
        <dbReference type="ChEBI" id="CHEBI:65317"/>
        <dbReference type="EC" id="3.6.1.9"/>
    </reaction>
</comment>
<comment type="cofactor">
    <cofactor evidence="1">
        <name>a divalent metal cation</name>
        <dbReference type="ChEBI" id="CHEBI:60240"/>
    </cofactor>
</comment>
<comment type="subcellular location">
    <subcellularLocation>
        <location evidence="1">Cytoplasm</location>
    </subcellularLocation>
</comment>
<comment type="similarity">
    <text evidence="1">Belongs to the Maf family.</text>
</comment>
<comment type="sequence caution" evidence="2">
    <conflict type="erroneous initiation">
        <sequence resource="EMBL-CDS" id="ABB56241"/>
    </conflict>
</comment>
<feature type="chain" id="PRO_0000267450" description="Nucleoside triphosphate pyrophosphatase">
    <location>
        <begin position="1"/>
        <end position="199"/>
    </location>
</feature>
<feature type="active site" description="Proton acceptor" evidence="1">
    <location>
        <position position="72"/>
    </location>
</feature>
<gene>
    <name type="ordered locus">Synpcc7942_0209</name>
</gene>
<reference key="1">
    <citation type="submission" date="2005-08" db="EMBL/GenBank/DDBJ databases">
        <title>Complete sequence of chromosome 1 of Synechococcus elongatus PCC 7942.</title>
        <authorList>
            <consortium name="US DOE Joint Genome Institute"/>
            <person name="Copeland A."/>
            <person name="Lucas S."/>
            <person name="Lapidus A."/>
            <person name="Barry K."/>
            <person name="Detter J.C."/>
            <person name="Glavina T."/>
            <person name="Hammon N."/>
            <person name="Israni S."/>
            <person name="Pitluck S."/>
            <person name="Schmutz J."/>
            <person name="Larimer F."/>
            <person name="Land M."/>
            <person name="Kyrpides N."/>
            <person name="Lykidis A."/>
            <person name="Golden S."/>
            <person name="Richardson P."/>
        </authorList>
    </citation>
    <scope>NUCLEOTIDE SEQUENCE [LARGE SCALE GENOMIC DNA]</scope>
    <source>
        <strain>ATCC 33912 / PCC 7942 / FACHB-805</strain>
    </source>
</reference>
<organism>
    <name type="scientific">Synechococcus elongatus (strain ATCC 33912 / PCC 7942 / FACHB-805)</name>
    <name type="common">Anacystis nidulans R2</name>
    <dbReference type="NCBI Taxonomy" id="1140"/>
    <lineage>
        <taxon>Bacteria</taxon>
        <taxon>Bacillati</taxon>
        <taxon>Cyanobacteriota</taxon>
        <taxon>Cyanophyceae</taxon>
        <taxon>Synechococcales</taxon>
        <taxon>Synechococcaceae</taxon>
        <taxon>Synechococcus</taxon>
    </lineage>
</organism>
<proteinExistence type="inferred from homology"/>
<evidence type="ECO:0000255" key="1">
    <source>
        <dbReference type="HAMAP-Rule" id="MF_00528"/>
    </source>
</evidence>
<evidence type="ECO:0000305" key="2"/>